<reference key="1">
    <citation type="journal article" date="2000" name="Nature">
        <title>Complete genome sequence of Pseudomonas aeruginosa PAO1, an opportunistic pathogen.</title>
        <authorList>
            <person name="Stover C.K."/>
            <person name="Pham X.-Q.T."/>
            <person name="Erwin A.L."/>
            <person name="Mizoguchi S.D."/>
            <person name="Warrener P."/>
            <person name="Hickey M.J."/>
            <person name="Brinkman F.S.L."/>
            <person name="Hufnagle W.O."/>
            <person name="Kowalik D.J."/>
            <person name="Lagrou M."/>
            <person name="Garber R.L."/>
            <person name="Goltry L."/>
            <person name="Tolentino E."/>
            <person name="Westbrock-Wadman S."/>
            <person name="Yuan Y."/>
            <person name="Brody L.L."/>
            <person name="Coulter S.N."/>
            <person name="Folger K.R."/>
            <person name="Kas A."/>
            <person name="Larbig K."/>
            <person name="Lim R.M."/>
            <person name="Smith K.A."/>
            <person name="Spencer D.H."/>
            <person name="Wong G.K.-S."/>
            <person name="Wu Z."/>
            <person name="Paulsen I.T."/>
            <person name="Reizer J."/>
            <person name="Saier M.H. Jr."/>
            <person name="Hancock R.E.W."/>
            <person name="Lory S."/>
            <person name="Olson M.V."/>
        </authorList>
    </citation>
    <scope>NUCLEOTIDE SEQUENCE [LARGE SCALE GENOMIC DNA]</scope>
    <source>
        <strain>ATCC 15692 / DSM 22644 / CIP 104116 / JCM 14847 / LMG 12228 / 1C / PRS 101 / PAO1</strain>
    </source>
</reference>
<reference key="2">
    <citation type="journal article" date="1996" name="Gene">
        <title>Molecular analysis of the Pseudomonas aeruginosa genes, ruvA, ruvB and ruvC, involved in processing of homologous recombination intermediates.</title>
        <authorList>
            <person name="Hishida T."/>
            <person name="Iwasaki H."/>
            <person name="Ishioka K."/>
            <person name="Shinagawa H."/>
        </authorList>
    </citation>
    <scope>NUCLEOTIDE SEQUENCE [GENOMIC DNA] OF 231-591</scope>
    <source>
        <strain>ATCC 15692 / DSM 22644 / CIP 104116 / JCM 14847 / LMG 12228 / 1C / PRS 101 / PAO1</strain>
    </source>
</reference>
<reference key="3">
    <citation type="journal article" date="2006" name="J. Bacteriol.">
        <title>Two residues in the anticodon recognition domain of the aspartyl-tRNA synthetase from Pseudomonas aeruginosa are individually implicated in the recognition of tRNAAsn.</title>
        <authorList>
            <person name="Bernard D."/>
            <person name="Akochy P.M."/>
            <person name="Beaulieu D."/>
            <person name="Lapointe J."/>
            <person name="Roy P.H."/>
        </authorList>
    </citation>
    <scope>FUNCTION AS A NON-DISCRIMINATING ASPRS</scope>
    <scope>CATALYTIC ACTIVITY</scope>
    <scope>SUBSTRATE SPECIFICITY</scope>
    <scope>MUTAGENESIS OF HIS-31 AND GLY-82</scope>
    <source>
        <strain>ATCC 15692 / DSM 22644 / CIP 104116 / JCM 14847 / LMG 12228 / 1C / PRS 101 / PAO1</strain>
    </source>
</reference>
<dbReference type="EC" id="6.1.1.23" evidence="1"/>
<dbReference type="EMBL" id="AE004091">
    <property type="protein sequence ID" value="AAG04352.1"/>
    <property type="molecule type" value="Genomic_DNA"/>
</dbReference>
<dbReference type="EMBL" id="D83138">
    <property type="protein sequence ID" value="BAA11815.1"/>
    <property type="molecule type" value="Genomic_DNA"/>
</dbReference>
<dbReference type="PIR" id="E83524">
    <property type="entry name" value="E83524"/>
</dbReference>
<dbReference type="PIR" id="PC4295">
    <property type="entry name" value="PC4295"/>
</dbReference>
<dbReference type="RefSeq" id="NP_249654.1">
    <property type="nucleotide sequence ID" value="NC_002516.2"/>
</dbReference>
<dbReference type="RefSeq" id="WP_003123218.1">
    <property type="nucleotide sequence ID" value="NZ_QZGE01000007.1"/>
</dbReference>
<dbReference type="PDB" id="4WJ3">
    <property type="method" value="X-ray"/>
    <property type="resolution" value="3.70 A"/>
    <property type="chains" value="M/N/O/P=1-591"/>
</dbReference>
<dbReference type="PDB" id="4WJ4">
    <property type="method" value="X-ray"/>
    <property type="resolution" value="3.29 A"/>
    <property type="chains" value="A=1-591"/>
</dbReference>
<dbReference type="PDBsum" id="4WJ3"/>
<dbReference type="PDBsum" id="4WJ4"/>
<dbReference type="SMR" id="Q51422"/>
<dbReference type="FunCoup" id="Q51422">
    <property type="interactions" value="748"/>
</dbReference>
<dbReference type="STRING" id="208964.PA0963"/>
<dbReference type="PaxDb" id="208964-PA0963"/>
<dbReference type="GeneID" id="881917"/>
<dbReference type="KEGG" id="pae:PA0963"/>
<dbReference type="PATRIC" id="fig|208964.12.peg.1001"/>
<dbReference type="PseudoCAP" id="PA0963"/>
<dbReference type="HOGENOM" id="CLU_014330_3_2_6"/>
<dbReference type="InParanoid" id="Q51422"/>
<dbReference type="OrthoDB" id="9802326at2"/>
<dbReference type="PhylomeDB" id="Q51422"/>
<dbReference type="BioCyc" id="PAER208964:G1FZ6-984-MONOMER"/>
<dbReference type="EvolutionaryTrace" id="Q51422"/>
<dbReference type="Proteomes" id="UP000002438">
    <property type="component" value="Chromosome"/>
</dbReference>
<dbReference type="GO" id="GO:0005737">
    <property type="term" value="C:cytoplasm"/>
    <property type="evidence" value="ECO:0007669"/>
    <property type="project" value="UniProtKB-SubCell"/>
</dbReference>
<dbReference type="GO" id="GO:0004815">
    <property type="term" value="F:aspartate-tRNA ligase activity"/>
    <property type="evidence" value="ECO:0000318"/>
    <property type="project" value="GO_Central"/>
</dbReference>
<dbReference type="GO" id="GO:0050560">
    <property type="term" value="F:aspartate-tRNA(Asn) ligase activity"/>
    <property type="evidence" value="ECO:0007669"/>
    <property type="project" value="UniProtKB-EC"/>
</dbReference>
<dbReference type="GO" id="GO:0005524">
    <property type="term" value="F:ATP binding"/>
    <property type="evidence" value="ECO:0007669"/>
    <property type="project" value="UniProtKB-UniRule"/>
</dbReference>
<dbReference type="GO" id="GO:0003676">
    <property type="term" value="F:nucleic acid binding"/>
    <property type="evidence" value="ECO:0007669"/>
    <property type="project" value="InterPro"/>
</dbReference>
<dbReference type="GO" id="GO:0006422">
    <property type="term" value="P:aspartyl-tRNA aminoacylation"/>
    <property type="evidence" value="ECO:0000318"/>
    <property type="project" value="GO_Central"/>
</dbReference>
<dbReference type="CDD" id="cd00777">
    <property type="entry name" value="AspRS_core"/>
    <property type="match status" value="1"/>
</dbReference>
<dbReference type="CDD" id="cd04317">
    <property type="entry name" value="EcAspRS_like_N"/>
    <property type="match status" value="1"/>
</dbReference>
<dbReference type="Gene3D" id="3.30.930.10">
    <property type="entry name" value="Bira Bifunctional Protein, Domain 2"/>
    <property type="match status" value="1"/>
</dbReference>
<dbReference type="Gene3D" id="3.30.1360.30">
    <property type="entry name" value="GAD-like domain"/>
    <property type="match status" value="1"/>
</dbReference>
<dbReference type="Gene3D" id="2.40.50.140">
    <property type="entry name" value="Nucleic acid-binding proteins"/>
    <property type="match status" value="1"/>
</dbReference>
<dbReference type="HAMAP" id="MF_00044">
    <property type="entry name" value="Asp_tRNA_synth_type1"/>
    <property type="match status" value="1"/>
</dbReference>
<dbReference type="InterPro" id="IPR004364">
    <property type="entry name" value="Aa-tRNA-synt_II"/>
</dbReference>
<dbReference type="InterPro" id="IPR006195">
    <property type="entry name" value="aa-tRNA-synth_II"/>
</dbReference>
<dbReference type="InterPro" id="IPR045864">
    <property type="entry name" value="aa-tRNA-synth_II/BPL/LPL"/>
</dbReference>
<dbReference type="InterPro" id="IPR004524">
    <property type="entry name" value="Asp-tRNA-ligase_1"/>
</dbReference>
<dbReference type="InterPro" id="IPR047089">
    <property type="entry name" value="Asp-tRNA-ligase_1_N"/>
</dbReference>
<dbReference type="InterPro" id="IPR002312">
    <property type="entry name" value="Asp/Asn-tRNA-synth_IIb"/>
</dbReference>
<dbReference type="InterPro" id="IPR047090">
    <property type="entry name" value="AspRS_core"/>
</dbReference>
<dbReference type="InterPro" id="IPR004115">
    <property type="entry name" value="GAD-like_sf"/>
</dbReference>
<dbReference type="InterPro" id="IPR029351">
    <property type="entry name" value="GAD_dom"/>
</dbReference>
<dbReference type="InterPro" id="IPR012340">
    <property type="entry name" value="NA-bd_OB-fold"/>
</dbReference>
<dbReference type="InterPro" id="IPR004365">
    <property type="entry name" value="NA-bd_OB_tRNA"/>
</dbReference>
<dbReference type="NCBIfam" id="TIGR00459">
    <property type="entry name" value="aspS_bact"/>
    <property type="match status" value="1"/>
</dbReference>
<dbReference type="NCBIfam" id="NF001750">
    <property type="entry name" value="PRK00476.1"/>
    <property type="match status" value="1"/>
</dbReference>
<dbReference type="PANTHER" id="PTHR22594:SF5">
    <property type="entry name" value="ASPARTATE--TRNA LIGASE, MITOCHONDRIAL"/>
    <property type="match status" value="1"/>
</dbReference>
<dbReference type="PANTHER" id="PTHR22594">
    <property type="entry name" value="ASPARTYL/LYSYL-TRNA SYNTHETASE"/>
    <property type="match status" value="1"/>
</dbReference>
<dbReference type="Pfam" id="PF02938">
    <property type="entry name" value="GAD"/>
    <property type="match status" value="1"/>
</dbReference>
<dbReference type="Pfam" id="PF00152">
    <property type="entry name" value="tRNA-synt_2"/>
    <property type="match status" value="1"/>
</dbReference>
<dbReference type="Pfam" id="PF01336">
    <property type="entry name" value="tRNA_anti-codon"/>
    <property type="match status" value="1"/>
</dbReference>
<dbReference type="PRINTS" id="PR01042">
    <property type="entry name" value="TRNASYNTHASP"/>
</dbReference>
<dbReference type="SUPFAM" id="SSF55681">
    <property type="entry name" value="Class II aaRS and biotin synthetases"/>
    <property type="match status" value="1"/>
</dbReference>
<dbReference type="SUPFAM" id="SSF55261">
    <property type="entry name" value="GAD domain-like"/>
    <property type="match status" value="1"/>
</dbReference>
<dbReference type="SUPFAM" id="SSF50249">
    <property type="entry name" value="Nucleic acid-binding proteins"/>
    <property type="match status" value="1"/>
</dbReference>
<dbReference type="PROSITE" id="PS50862">
    <property type="entry name" value="AA_TRNA_LIGASE_II"/>
    <property type="match status" value="1"/>
</dbReference>
<proteinExistence type="evidence at protein level"/>
<gene>
    <name evidence="1" type="primary">aspS</name>
    <name type="ordered locus">PA0963</name>
</gene>
<keyword id="KW-0002">3D-structure</keyword>
<keyword id="KW-0030">Aminoacyl-tRNA synthetase</keyword>
<keyword id="KW-0067">ATP-binding</keyword>
<keyword id="KW-0963">Cytoplasm</keyword>
<keyword id="KW-0436">Ligase</keyword>
<keyword id="KW-0547">Nucleotide-binding</keyword>
<keyword id="KW-0648">Protein biosynthesis</keyword>
<keyword id="KW-1185">Reference proteome</keyword>
<protein>
    <recommendedName>
        <fullName evidence="1">Aspartate--tRNA(Asp/Asn) ligase</fullName>
        <ecNumber evidence="1">6.1.1.23</ecNumber>
    </recommendedName>
    <alternativeName>
        <fullName evidence="1">Aspartyl-tRNA synthetase</fullName>
        <shortName evidence="1">AspRS</shortName>
    </alternativeName>
    <alternativeName>
        <fullName evidence="1">Non-discriminating aspartyl-tRNA synthetase</fullName>
        <shortName evidence="1">ND-AspRS</shortName>
    </alternativeName>
</protein>
<comment type="function">
    <text evidence="2">Aspartyl-tRNA synthetase with relaxed tRNA specificity since it is able to aspartylate not only its cognate tRNA(Asp) but also tRNA(Asn). Is 1.5 times more efficient at aminoacylating E.coli tRNA(Asp) over tRNA(Asn). Reaction proceeds in two steps: L-aspartate is first activated by ATP to form Asp-AMP and then transferred to the acceptor end of tRNA(Asp/Asn).</text>
</comment>
<comment type="catalytic activity">
    <reaction evidence="1 2">
        <text>tRNA(Asx) + L-aspartate + ATP = L-aspartyl-tRNA(Asx) + AMP + diphosphate</text>
        <dbReference type="Rhea" id="RHEA:18349"/>
        <dbReference type="Rhea" id="RHEA-COMP:9710"/>
        <dbReference type="Rhea" id="RHEA-COMP:9711"/>
        <dbReference type="ChEBI" id="CHEBI:29991"/>
        <dbReference type="ChEBI" id="CHEBI:30616"/>
        <dbReference type="ChEBI" id="CHEBI:33019"/>
        <dbReference type="ChEBI" id="CHEBI:78442"/>
        <dbReference type="ChEBI" id="CHEBI:78516"/>
        <dbReference type="ChEBI" id="CHEBI:456215"/>
        <dbReference type="EC" id="6.1.1.23"/>
    </reaction>
</comment>
<comment type="subunit">
    <text evidence="1">Homodimer.</text>
</comment>
<comment type="subcellular location">
    <subcellularLocation>
        <location evidence="1">Cytoplasm</location>
    </subcellularLocation>
</comment>
<comment type="similarity">
    <text evidence="1">Belongs to the class-II aminoacyl-tRNA synthetase family. Type 1 subfamily.</text>
</comment>
<name>SYDND_PSEAE</name>
<accession>Q51422</accession>
<feature type="chain" id="PRO_0000110924" description="Aspartate--tRNA(Asp/Asn) ligase">
    <location>
        <begin position="1"/>
        <end position="591"/>
    </location>
</feature>
<feature type="region of interest" description="Aspartate" evidence="1">
    <location>
        <begin position="198"/>
        <end position="201"/>
    </location>
</feature>
<feature type="binding site" evidence="1">
    <location>
        <position position="174"/>
    </location>
    <ligand>
        <name>L-aspartate</name>
        <dbReference type="ChEBI" id="CHEBI:29991"/>
    </ligand>
</feature>
<feature type="binding site" evidence="1">
    <location>
        <begin position="220"/>
        <end position="222"/>
    </location>
    <ligand>
        <name>ATP</name>
        <dbReference type="ChEBI" id="CHEBI:30616"/>
    </ligand>
</feature>
<feature type="binding site" evidence="1">
    <location>
        <position position="220"/>
    </location>
    <ligand>
        <name>L-aspartate</name>
        <dbReference type="ChEBI" id="CHEBI:29991"/>
    </ligand>
</feature>
<feature type="binding site" evidence="1">
    <location>
        <position position="229"/>
    </location>
    <ligand>
        <name>ATP</name>
        <dbReference type="ChEBI" id="CHEBI:30616"/>
    </ligand>
</feature>
<feature type="binding site" evidence="1">
    <location>
        <position position="450"/>
    </location>
    <ligand>
        <name>L-aspartate</name>
        <dbReference type="ChEBI" id="CHEBI:29991"/>
    </ligand>
</feature>
<feature type="binding site" evidence="1">
    <location>
        <position position="483"/>
    </location>
    <ligand>
        <name>ATP</name>
        <dbReference type="ChEBI" id="CHEBI:30616"/>
    </ligand>
</feature>
<feature type="binding site" evidence="1">
    <location>
        <position position="490"/>
    </location>
    <ligand>
        <name>L-aspartate</name>
        <dbReference type="ChEBI" id="CHEBI:29991"/>
    </ligand>
</feature>
<feature type="binding site" evidence="1">
    <location>
        <begin position="535"/>
        <end position="538"/>
    </location>
    <ligand>
        <name>ATP</name>
        <dbReference type="ChEBI" id="CHEBI:30616"/>
    </ligand>
</feature>
<feature type="site" description="Important for tRNA non-discrimination">
    <location>
        <position position="31"/>
    </location>
</feature>
<feature type="site" description="Important for tRNA non-discrimination">
    <location>
        <position position="82"/>
    </location>
</feature>
<feature type="mutagenesis site" description="Enhances enzyme specificity for tRNA(Asp) over tRNA(Asn) by 3.5-fold, by reducing enzyme's ability to misacylate tRNA(Asn) when tested against E.coli tRNA, but shows little effect when tested against P.aeruginosa tRNA." evidence="2">
    <original>H</original>
    <variation>L</variation>
    <location>
        <position position="31"/>
    </location>
</feature>
<feature type="mutagenesis site" description="Enhances enzyme specificity for tRNA(Asp) over tRNA(Asn) by 4.2-fold, by reducing enzyme's ability to misacylate tRNA(Asn) when tested against E.coli tRNA, but shows little effect when tested against P.aeruginosa tRNA." evidence="2">
    <original>G</original>
    <variation>K</variation>
    <location>
        <position position="82"/>
    </location>
</feature>
<feature type="sequence conflict" description="In Ref. 2; BAA11815." evidence="3" ref="2">
    <original>P</original>
    <variation>A</variation>
    <location>
        <position position="588"/>
    </location>
</feature>
<feature type="helix" evidence="4">
    <location>
        <begin position="7"/>
        <end position="9"/>
    </location>
</feature>
<feature type="turn" evidence="4">
    <location>
        <begin position="13"/>
        <end position="16"/>
    </location>
</feature>
<feature type="strand" evidence="4">
    <location>
        <begin position="18"/>
        <end position="30"/>
    </location>
</feature>
<feature type="strand" evidence="4">
    <location>
        <begin position="32"/>
        <end position="41"/>
    </location>
</feature>
<feature type="strand" evidence="4">
    <location>
        <begin position="44"/>
        <end position="50"/>
    </location>
</feature>
<feature type="helix" evidence="4">
    <location>
        <begin position="55"/>
        <end position="62"/>
    </location>
</feature>
<feature type="strand" evidence="4">
    <location>
        <begin position="69"/>
        <end position="77"/>
    </location>
</feature>
<feature type="helix" evidence="4">
    <location>
        <begin position="81"/>
        <end position="83"/>
    </location>
</feature>
<feature type="strand" evidence="4">
    <location>
        <begin position="86"/>
        <end position="88"/>
    </location>
</feature>
<feature type="turn" evidence="4">
    <location>
        <begin position="89"/>
        <end position="92"/>
    </location>
</feature>
<feature type="strand" evidence="4">
    <location>
        <begin position="94"/>
        <end position="104"/>
    </location>
</feature>
<feature type="helix" evidence="4">
    <location>
        <begin position="121"/>
        <end position="126"/>
    </location>
</feature>
<feature type="helix" evidence="4">
    <location>
        <begin position="128"/>
        <end position="131"/>
    </location>
</feature>
<feature type="helix" evidence="4">
    <location>
        <begin position="135"/>
        <end position="157"/>
    </location>
</feature>
<feature type="strand" evidence="4">
    <location>
        <begin position="167"/>
        <end position="169"/>
    </location>
</feature>
<feature type="strand" evidence="4">
    <location>
        <begin position="173"/>
        <end position="176"/>
    </location>
</feature>
<feature type="strand" evidence="4">
    <location>
        <begin position="180"/>
        <end position="182"/>
    </location>
</feature>
<feature type="strand" evidence="4">
    <location>
        <begin position="184"/>
        <end position="186"/>
    </location>
</feature>
<feature type="strand" evidence="4">
    <location>
        <begin position="190"/>
        <end position="192"/>
    </location>
</feature>
<feature type="helix" evidence="4">
    <location>
        <begin position="198"/>
        <end position="206"/>
    </location>
</feature>
<feature type="strand" evidence="4">
    <location>
        <begin position="210"/>
        <end position="219"/>
    </location>
</feature>
<feature type="strand" evidence="4">
    <location>
        <begin position="230"/>
        <end position="241"/>
    </location>
</feature>
<feature type="helix" evidence="4">
    <location>
        <begin position="244"/>
        <end position="261"/>
    </location>
</feature>
<feature type="strand" evidence="4">
    <location>
        <begin position="272"/>
        <end position="274"/>
    </location>
</feature>
<feature type="helix" evidence="4">
    <location>
        <begin position="275"/>
        <end position="281"/>
    </location>
</feature>
<feature type="strand" evidence="4">
    <location>
        <begin position="282"/>
        <end position="286"/>
    </location>
</feature>
<feature type="strand" evidence="4">
    <location>
        <begin position="295"/>
        <end position="297"/>
    </location>
</feature>
<feature type="helix" evidence="4">
    <location>
        <begin position="299"/>
        <end position="301"/>
    </location>
</feature>
<feature type="helix" evidence="4">
    <location>
        <begin position="308"/>
        <end position="315"/>
    </location>
</feature>
<feature type="strand" evidence="4">
    <location>
        <begin position="319"/>
        <end position="326"/>
    </location>
</feature>
<feature type="helix" evidence="4">
    <location>
        <begin position="334"/>
        <end position="345"/>
    </location>
</feature>
<feature type="turn" evidence="4">
    <location>
        <begin position="346"/>
        <end position="348"/>
    </location>
</feature>
<feature type="strand" evidence="4">
    <location>
        <begin position="353"/>
        <end position="358"/>
    </location>
</feature>
<feature type="helix" evidence="4">
    <location>
        <begin position="360"/>
        <end position="362"/>
    </location>
</feature>
<feature type="turn" evidence="4">
    <location>
        <begin position="363"/>
        <end position="366"/>
    </location>
</feature>
<feature type="turn" evidence="4">
    <location>
        <begin position="372"/>
        <end position="374"/>
    </location>
</feature>
<feature type="helix" evidence="4">
    <location>
        <begin position="377"/>
        <end position="387"/>
    </location>
</feature>
<feature type="strand" evidence="4">
    <location>
        <begin position="394"/>
        <end position="401"/>
    </location>
</feature>
<feature type="helix" evidence="4">
    <location>
        <begin position="402"/>
        <end position="419"/>
    </location>
</feature>
<feature type="strand" evidence="4">
    <location>
        <begin position="429"/>
        <end position="433"/>
    </location>
</feature>
<feature type="strand" evidence="4">
    <location>
        <begin position="436"/>
        <end position="440"/>
    </location>
</feature>
<feature type="strand" evidence="4">
    <location>
        <begin position="442"/>
        <end position="444"/>
    </location>
</feature>
<feature type="strand" evidence="4">
    <location>
        <begin position="446"/>
        <end position="450"/>
    </location>
</feature>
<feature type="strand" evidence="4">
    <location>
        <begin position="456"/>
        <end position="458"/>
    </location>
</feature>
<feature type="helix" evidence="4">
    <location>
        <begin position="461"/>
        <end position="464"/>
    </location>
</feature>
<feature type="helix" evidence="4">
    <location>
        <begin position="467"/>
        <end position="469"/>
    </location>
</feature>
<feature type="strand" evidence="4">
    <location>
        <begin position="474"/>
        <end position="479"/>
    </location>
</feature>
<feature type="strand" evidence="4">
    <location>
        <begin position="482"/>
        <end position="490"/>
    </location>
</feature>
<feature type="helix" evidence="4">
    <location>
        <begin position="495"/>
        <end position="503"/>
    </location>
</feature>
<feature type="helix" evidence="4">
    <location>
        <begin position="508"/>
        <end position="513"/>
    </location>
</feature>
<feature type="helix" evidence="4">
    <location>
        <begin position="516"/>
        <end position="523"/>
    </location>
</feature>
<feature type="strand" evidence="4">
    <location>
        <begin position="529"/>
        <end position="535"/>
    </location>
</feature>
<feature type="helix" evidence="4">
    <location>
        <begin position="536"/>
        <end position="544"/>
    </location>
</feature>
<feature type="helix" evidence="4">
    <location>
        <begin position="549"/>
        <end position="552"/>
    </location>
</feature>
<feature type="strand" evidence="4">
    <location>
        <begin position="553"/>
        <end position="555"/>
    </location>
</feature>
<feature type="turn" evidence="4">
    <location>
        <begin position="564"/>
        <end position="567"/>
    </location>
</feature>
<feature type="helix" evidence="4">
    <location>
        <begin position="574"/>
        <end position="579"/>
    </location>
</feature>
<evidence type="ECO:0000255" key="1">
    <source>
        <dbReference type="HAMAP-Rule" id="MF_00044"/>
    </source>
</evidence>
<evidence type="ECO:0000269" key="2">
    <source>
    </source>
</evidence>
<evidence type="ECO:0000305" key="3"/>
<evidence type="ECO:0007829" key="4">
    <source>
        <dbReference type="PDB" id="4WJ4"/>
    </source>
</evidence>
<sequence>MMRSHYCGQLNESLDGQEVTLCGWVHRRRDHGGVIFLDVRDREGLAQVVFDPDRAETFAKADRVRSEFVVKITGKVRLRPEGARNPNMASGSIEVLGYELEVLNQAETPPFPLDEYSDVGEETRLRYRFIDLRRPEMAAKLKLRARITSSIRRYLDDNGFLDVETPILGRPTPEGARDYLVPSRTYPGHFFALPQSPQLFKQLLMVAGFDRYYQIAKCFRDEDLRADRQPEFTQIDIETSFLDESDIIGITEKMVRQLFKEVLDVEFDEFPHMPFEEAMRRYGSDKPDLRIPLELVDVADQLKEVEFKVFSGPANDPKGRVAALRVPGAASMPRSQIDDYTKFVGIYGAKGLAYIKVNERAKGVEGLQSPIVKFIPEANLNVILDRVGAVDGDIVFFGADKAKIVCDALGALRIKVGHDLKLLTREWAPMWVVDFPMFEENDDGSLSALHHPFTSPKCTPAELEANPGAALSRAYDMVLNGTELGGGSIRIHDKSMQQAVFRVLGIDEAEQEEKFGFLLDALKYGAPPHGGLAFGLDRLVMLMTGASSIREVIAFPKTQSAGDVMTQAPGSVDGKALRELHIRLREQPKAE</sequence>
<organism>
    <name type="scientific">Pseudomonas aeruginosa (strain ATCC 15692 / DSM 22644 / CIP 104116 / JCM 14847 / LMG 12228 / 1C / PRS 101 / PAO1)</name>
    <dbReference type="NCBI Taxonomy" id="208964"/>
    <lineage>
        <taxon>Bacteria</taxon>
        <taxon>Pseudomonadati</taxon>
        <taxon>Pseudomonadota</taxon>
        <taxon>Gammaproteobacteria</taxon>
        <taxon>Pseudomonadales</taxon>
        <taxon>Pseudomonadaceae</taxon>
        <taxon>Pseudomonas</taxon>
    </lineage>
</organism>